<comment type="function">
    <text evidence="1">The RuvA-RuvB-RuvC complex processes Holliday junction (HJ) DNA during genetic recombination and DNA repair. Endonuclease that resolves HJ intermediates. Cleaves cruciform DNA by making single-stranded nicks across the HJ at symmetrical positions within the homologous arms, yielding a 5'-phosphate and a 3'-hydroxyl group; requires a central core of homology in the junction. The consensus cleavage sequence is 5'-(A/T)TT(C/G)-3'. Cleavage occurs on the 3'-side of the TT dinucleotide at the point of strand exchange. HJ branch migration catalyzed by RuvA-RuvB allows RuvC to scan DNA until it finds its consensus sequence, where it cleaves and resolves the cruciform DNA.</text>
</comment>
<comment type="catalytic activity">
    <reaction evidence="1">
        <text>Endonucleolytic cleavage at a junction such as a reciprocal single-stranded crossover between two homologous DNA duplexes (Holliday junction).</text>
        <dbReference type="EC" id="3.1.21.10"/>
    </reaction>
</comment>
<comment type="cofactor">
    <cofactor evidence="1">
        <name>Mg(2+)</name>
        <dbReference type="ChEBI" id="CHEBI:18420"/>
    </cofactor>
    <text evidence="1">Binds 2 Mg(2+) ion per subunit.</text>
</comment>
<comment type="subunit">
    <text evidence="1">Homodimer which binds Holliday junction (HJ) DNA. The HJ becomes 2-fold symmetrical on binding to RuvC with unstacked arms; it has a different conformation from HJ DNA in complex with RuvA. In the full resolvosome a probable DNA-RuvA(4)-RuvB(12)-RuvC(2) complex forms which resolves the HJ.</text>
</comment>
<comment type="subcellular location">
    <subcellularLocation>
        <location evidence="1">Cytoplasm</location>
    </subcellularLocation>
</comment>
<comment type="similarity">
    <text evidence="1">Belongs to the RuvC family.</text>
</comment>
<accession>Q0BM65</accession>
<evidence type="ECO:0000255" key="1">
    <source>
        <dbReference type="HAMAP-Rule" id="MF_00034"/>
    </source>
</evidence>
<feature type="chain" id="PRO_1000002758" description="Crossover junction endodeoxyribonuclease RuvC">
    <location>
        <begin position="1"/>
        <end position="171"/>
    </location>
</feature>
<feature type="active site" evidence="1">
    <location>
        <position position="7"/>
    </location>
</feature>
<feature type="active site" evidence="1">
    <location>
        <position position="66"/>
    </location>
</feature>
<feature type="active site" evidence="1">
    <location>
        <position position="138"/>
    </location>
</feature>
<feature type="binding site" evidence="1">
    <location>
        <position position="7"/>
    </location>
    <ligand>
        <name>Mg(2+)</name>
        <dbReference type="ChEBI" id="CHEBI:18420"/>
        <label>1</label>
    </ligand>
</feature>
<feature type="binding site" evidence="1">
    <location>
        <position position="66"/>
    </location>
    <ligand>
        <name>Mg(2+)</name>
        <dbReference type="ChEBI" id="CHEBI:18420"/>
        <label>2</label>
    </ligand>
</feature>
<feature type="binding site" evidence="1">
    <location>
        <position position="138"/>
    </location>
    <ligand>
        <name>Mg(2+)</name>
        <dbReference type="ChEBI" id="CHEBI:18420"/>
        <label>1</label>
    </ligand>
</feature>
<gene>
    <name evidence="1" type="primary">ruvC</name>
    <name type="ordered locus">FTH_0909</name>
</gene>
<reference key="1">
    <citation type="journal article" date="2006" name="J. Bacteriol.">
        <title>Chromosome rearrangement and diversification of Francisella tularensis revealed by the type B (OSU18) genome sequence.</title>
        <authorList>
            <person name="Petrosino J.F."/>
            <person name="Xiang Q."/>
            <person name="Karpathy S.E."/>
            <person name="Jiang H."/>
            <person name="Yerrapragada S."/>
            <person name="Liu Y."/>
            <person name="Gioia J."/>
            <person name="Hemphill L."/>
            <person name="Gonzalez A."/>
            <person name="Raghavan T.M."/>
            <person name="Uzman A."/>
            <person name="Fox G.E."/>
            <person name="Highlander S."/>
            <person name="Reichard M."/>
            <person name="Morton R.J."/>
            <person name="Clinkenbeard K.D."/>
            <person name="Weinstock G.M."/>
        </authorList>
    </citation>
    <scope>NUCLEOTIDE SEQUENCE [LARGE SCALE GENOMIC DNA]</scope>
    <source>
        <strain>OSU18</strain>
    </source>
</reference>
<keyword id="KW-0963">Cytoplasm</keyword>
<keyword id="KW-0227">DNA damage</keyword>
<keyword id="KW-0233">DNA recombination</keyword>
<keyword id="KW-0234">DNA repair</keyword>
<keyword id="KW-0238">DNA-binding</keyword>
<keyword id="KW-0255">Endonuclease</keyword>
<keyword id="KW-0378">Hydrolase</keyword>
<keyword id="KW-0460">Magnesium</keyword>
<keyword id="KW-0479">Metal-binding</keyword>
<keyword id="KW-0540">Nuclease</keyword>
<organism>
    <name type="scientific">Francisella tularensis subsp. holarctica (strain OSU18)</name>
    <dbReference type="NCBI Taxonomy" id="393011"/>
    <lineage>
        <taxon>Bacteria</taxon>
        <taxon>Pseudomonadati</taxon>
        <taxon>Pseudomonadota</taxon>
        <taxon>Gammaproteobacteria</taxon>
        <taxon>Thiotrichales</taxon>
        <taxon>Francisellaceae</taxon>
        <taxon>Francisella</taxon>
    </lineage>
</organism>
<sequence>MVILGIDPGSRITGFGVIKVQDNKIYYVASGCIQITEITTPKRLKQIADGITQIINIYAPTEAAIEQIFMFQNPMGAIKLGQARGVAMCTLAINNLEVSEYSAKQIKQAVVGTGGAAKSQVQHMVQSLLGLSKKPPEDAADALAIAICHYHSSKSLAKISGASRVSQKRIK</sequence>
<name>RUVC_FRATO</name>
<protein>
    <recommendedName>
        <fullName evidence="1">Crossover junction endodeoxyribonuclease RuvC</fullName>
        <ecNumber evidence="1">3.1.21.10</ecNumber>
    </recommendedName>
    <alternativeName>
        <fullName evidence="1">Holliday junction nuclease RuvC</fullName>
    </alternativeName>
    <alternativeName>
        <fullName evidence="1">Holliday junction resolvase RuvC</fullName>
    </alternativeName>
</protein>
<dbReference type="EC" id="3.1.21.10" evidence="1"/>
<dbReference type="EMBL" id="CP000437">
    <property type="protein sequence ID" value="ABI82819.1"/>
    <property type="molecule type" value="Genomic_DNA"/>
</dbReference>
<dbReference type="RefSeq" id="WP_003015702.1">
    <property type="nucleotide sequence ID" value="NC_017463.1"/>
</dbReference>
<dbReference type="SMR" id="Q0BM65"/>
<dbReference type="KEGG" id="fth:FTH_0909"/>
<dbReference type="GO" id="GO:0005737">
    <property type="term" value="C:cytoplasm"/>
    <property type="evidence" value="ECO:0007669"/>
    <property type="project" value="UniProtKB-SubCell"/>
</dbReference>
<dbReference type="GO" id="GO:0048476">
    <property type="term" value="C:Holliday junction resolvase complex"/>
    <property type="evidence" value="ECO:0007669"/>
    <property type="project" value="UniProtKB-UniRule"/>
</dbReference>
<dbReference type="GO" id="GO:0008821">
    <property type="term" value="F:crossover junction DNA endonuclease activity"/>
    <property type="evidence" value="ECO:0007669"/>
    <property type="project" value="UniProtKB-UniRule"/>
</dbReference>
<dbReference type="GO" id="GO:0003677">
    <property type="term" value="F:DNA binding"/>
    <property type="evidence" value="ECO:0007669"/>
    <property type="project" value="UniProtKB-KW"/>
</dbReference>
<dbReference type="GO" id="GO:0000287">
    <property type="term" value="F:magnesium ion binding"/>
    <property type="evidence" value="ECO:0007669"/>
    <property type="project" value="UniProtKB-UniRule"/>
</dbReference>
<dbReference type="GO" id="GO:0006310">
    <property type="term" value="P:DNA recombination"/>
    <property type="evidence" value="ECO:0007669"/>
    <property type="project" value="UniProtKB-UniRule"/>
</dbReference>
<dbReference type="GO" id="GO:0006281">
    <property type="term" value="P:DNA repair"/>
    <property type="evidence" value="ECO:0007669"/>
    <property type="project" value="UniProtKB-UniRule"/>
</dbReference>
<dbReference type="CDD" id="cd16962">
    <property type="entry name" value="RuvC"/>
    <property type="match status" value="1"/>
</dbReference>
<dbReference type="FunFam" id="3.30.420.10:FF:000002">
    <property type="entry name" value="Crossover junction endodeoxyribonuclease RuvC"/>
    <property type="match status" value="1"/>
</dbReference>
<dbReference type="Gene3D" id="3.30.420.10">
    <property type="entry name" value="Ribonuclease H-like superfamily/Ribonuclease H"/>
    <property type="match status" value="1"/>
</dbReference>
<dbReference type="HAMAP" id="MF_00034">
    <property type="entry name" value="RuvC"/>
    <property type="match status" value="1"/>
</dbReference>
<dbReference type="InterPro" id="IPR012337">
    <property type="entry name" value="RNaseH-like_sf"/>
</dbReference>
<dbReference type="InterPro" id="IPR036397">
    <property type="entry name" value="RNaseH_sf"/>
</dbReference>
<dbReference type="InterPro" id="IPR020563">
    <property type="entry name" value="X-over_junc_endoDNase_Mg_BS"/>
</dbReference>
<dbReference type="InterPro" id="IPR002176">
    <property type="entry name" value="X-over_junc_endoDNase_RuvC"/>
</dbReference>
<dbReference type="NCBIfam" id="NF000711">
    <property type="entry name" value="PRK00039.2-1"/>
    <property type="match status" value="1"/>
</dbReference>
<dbReference type="NCBIfam" id="TIGR00228">
    <property type="entry name" value="ruvC"/>
    <property type="match status" value="1"/>
</dbReference>
<dbReference type="PANTHER" id="PTHR30194">
    <property type="entry name" value="CROSSOVER JUNCTION ENDODEOXYRIBONUCLEASE RUVC"/>
    <property type="match status" value="1"/>
</dbReference>
<dbReference type="PANTHER" id="PTHR30194:SF3">
    <property type="entry name" value="CROSSOVER JUNCTION ENDODEOXYRIBONUCLEASE RUVC"/>
    <property type="match status" value="1"/>
</dbReference>
<dbReference type="Pfam" id="PF02075">
    <property type="entry name" value="RuvC"/>
    <property type="match status" value="1"/>
</dbReference>
<dbReference type="PRINTS" id="PR00696">
    <property type="entry name" value="RSOLVASERUVC"/>
</dbReference>
<dbReference type="SUPFAM" id="SSF53098">
    <property type="entry name" value="Ribonuclease H-like"/>
    <property type="match status" value="1"/>
</dbReference>
<dbReference type="PROSITE" id="PS01321">
    <property type="entry name" value="RUVC"/>
    <property type="match status" value="1"/>
</dbReference>
<proteinExistence type="inferred from homology"/>